<comment type="function">
    <text evidence="1">Catalyzes the formation of phosphatidylethanolamine (PtdEtn) from phosphatidylserine (PtdSer).</text>
</comment>
<comment type="catalytic activity">
    <reaction evidence="1">
        <text>a 1,2-diacyl-sn-glycero-3-phospho-L-serine + H(+) = a 1,2-diacyl-sn-glycero-3-phosphoethanolamine + CO2</text>
        <dbReference type="Rhea" id="RHEA:20828"/>
        <dbReference type="ChEBI" id="CHEBI:15378"/>
        <dbReference type="ChEBI" id="CHEBI:16526"/>
        <dbReference type="ChEBI" id="CHEBI:57262"/>
        <dbReference type="ChEBI" id="CHEBI:64612"/>
        <dbReference type="EC" id="4.1.1.65"/>
    </reaction>
</comment>
<comment type="cofactor">
    <cofactor evidence="1">
        <name>pyruvate</name>
        <dbReference type="ChEBI" id="CHEBI:15361"/>
    </cofactor>
    <text evidence="1">Binds 1 pyruvoyl group covalently per subunit.</text>
</comment>
<comment type="pathway">
    <text evidence="1">Phospholipid metabolism; phosphatidylethanolamine biosynthesis; phosphatidylethanolamine from CDP-diacylglycerol: step 2/2.</text>
</comment>
<comment type="subunit">
    <text evidence="1">Heterodimer of a large membrane-associated beta subunit and a small pyruvoyl-containing alpha subunit.</text>
</comment>
<comment type="subcellular location">
    <subcellularLocation>
        <location evidence="1">Cell membrane</location>
        <topology evidence="1">Peripheral membrane protein</topology>
    </subcellularLocation>
</comment>
<comment type="PTM">
    <text evidence="1">Is synthesized initially as an inactive proenzyme. Formation of the active enzyme involves a self-maturation process in which the active site pyruvoyl group is generated from an internal serine residue via an autocatalytic post-translational modification. Two non-identical subunits are generated from the proenzyme in this reaction, and the pyruvate is formed at the N-terminus of the alpha chain, which is derived from the carboxyl end of the proenzyme. The autoendoproteolytic cleavage occurs by a canonical serine protease mechanism, in which the side chain hydroxyl group of the serine supplies its oxygen atom to form the C-terminus of the beta chain, while the remainder of the serine residue undergoes an oxidative deamination to produce ammonia and the pyruvoyl prosthetic group on the alpha chain. During this reaction, the Ser that is part of the protease active site of the proenzyme becomes the pyruvoyl prosthetic group, which constitutes an essential element of the active site of the mature decarboxylase.</text>
</comment>
<comment type="similarity">
    <text evidence="1">Belongs to the phosphatidylserine decarboxylase family. PSD-B subfamily. Prokaryotic type I sub-subfamily.</text>
</comment>
<sequence>MNFVTTLTYLLPHRMLSSLARHVAYCQHPLIKQWLIDTVIAKFDVNLSEAAEPDAHAYPSFNAFFTRSLKAGIRPPDPNPDTLLMPADGRISQLGPIREGRIFQAKGQSFTATELLGDTAAASAFTNGLFATVYLSPRDYHRVHMPCTGQLLKTVHVPGRLFSVGPDAVRQIPRLFARNERLVCHFDTTFGPMVLVMVGALLVSGVETVWGGVEIPAYGDRITYKDYQGRNIAIERFAEMARFNYGSTVIVLLPPNVLTLAPHLTAESPVTLGQALAHRLSLNHSTQAPTQEK</sequence>
<protein>
    <recommendedName>
        <fullName evidence="1">Phosphatidylserine decarboxylase proenzyme</fullName>
        <ecNumber evidence="1">4.1.1.65</ecNumber>
    </recommendedName>
    <component>
        <recommendedName>
            <fullName evidence="1">Phosphatidylserine decarboxylase alpha chain</fullName>
        </recommendedName>
    </component>
    <component>
        <recommendedName>
            <fullName evidence="1">Phosphatidylserine decarboxylase beta chain</fullName>
        </recommendedName>
    </component>
</protein>
<gene>
    <name evidence="1" type="primary">psd</name>
    <name type="ordered locus">PD_0604</name>
</gene>
<proteinExistence type="inferred from homology"/>
<dbReference type="EC" id="4.1.1.65" evidence="1"/>
<dbReference type="EMBL" id="AE009442">
    <property type="protein sequence ID" value="AAO28476.1"/>
    <property type="molecule type" value="Genomic_DNA"/>
</dbReference>
<dbReference type="SMR" id="Q87DS7"/>
<dbReference type="KEGG" id="xft:PD_0604"/>
<dbReference type="HOGENOM" id="CLU_029061_4_1_6"/>
<dbReference type="UniPathway" id="UPA00558">
    <property type="reaction ID" value="UER00616"/>
</dbReference>
<dbReference type="Proteomes" id="UP000002516">
    <property type="component" value="Chromosome"/>
</dbReference>
<dbReference type="GO" id="GO:0005886">
    <property type="term" value="C:plasma membrane"/>
    <property type="evidence" value="ECO:0007669"/>
    <property type="project" value="UniProtKB-SubCell"/>
</dbReference>
<dbReference type="GO" id="GO:0004609">
    <property type="term" value="F:phosphatidylserine decarboxylase activity"/>
    <property type="evidence" value="ECO:0007669"/>
    <property type="project" value="UniProtKB-UniRule"/>
</dbReference>
<dbReference type="GO" id="GO:0006646">
    <property type="term" value="P:phosphatidylethanolamine biosynthetic process"/>
    <property type="evidence" value="ECO:0007669"/>
    <property type="project" value="UniProtKB-UniRule"/>
</dbReference>
<dbReference type="HAMAP" id="MF_00662">
    <property type="entry name" value="PS_decarb_PSD_B_type1"/>
    <property type="match status" value="1"/>
</dbReference>
<dbReference type="InterPro" id="IPR003817">
    <property type="entry name" value="PS_Dcarbxylase"/>
</dbReference>
<dbReference type="InterPro" id="IPR033177">
    <property type="entry name" value="PSD-B"/>
</dbReference>
<dbReference type="InterPro" id="IPR033178">
    <property type="entry name" value="PSD_type1_pro"/>
</dbReference>
<dbReference type="NCBIfam" id="TIGR00163">
    <property type="entry name" value="PS_decarb"/>
    <property type="match status" value="1"/>
</dbReference>
<dbReference type="PANTHER" id="PTHR10067">
    <property type="entry name" value="PHOSPHATIDYLSERINE DECARBOXYLASE"/>
    <property type="match status" value="1"/>
</dbReference>
<dbReference type="PANTHER" id="PTHR10067:SF6">
    <property type="entry name" value="PHOSPHATIDYLSERINE DECARBOXYLASE PROENZYME, MITOCHONDRIAL"/>
    <property type="match status" value="1"/>
</dbReference>
<dbReference type="Pfam" id="PF02666">
    <property type="entry name" value="PS_Dcarbxylase"/>
    <property type="match status" value="1"/>
</dbReference>
<evidence type="ECO:0000255" key="1">
    <source>
        <dbReference type="HAMAP-Rule" id="MF_00662"/>
    </source>
</evidence>
<name>PSD_XYLFT</name>
<feature type="chain" id="PRO_0000029721" description="Phosphatidylserine decarboxylase beta chain" evidence="1">
    <location>
        <begin position="1"/>
        <end position="246"/>
    </location>
</feature>
<feature type="chain" id="PRO_0000029722" description="Phosphatidylserine decarboxylase alpha chain" evidence="1">
    <location>
        <begin position="247"/>
        <end position="293"/>
    </location>
</feature>
<feature type="active site" description="Charge relay system; for autoendoproteolytic cleavage activity" evidence="1">
    <location>
        <position position="88"/>
    </location>
</feature>
<feature type="active site" description="Charge relay system; for autoendoproteolytic cleavage activity" evidence="1">
    <location>
        <position position="144"/>
    </location>
</feature>
<feature type="active site" description="Charge relay system; for autoendoproteolytic cleavage activity" evidence="1">
    <location>
        <position position="247"/>
    </location>
</feature>
<feature type="active site" description="Schiff-base intermediate with substrate; via pyruvic acid; for decarboxylase activity" evidence="1">
    <location>
        <position position="247"/>
    </location>
</feature>
<feature type="site" description="Cleavage (non-hydrolytic); by autocatalysis" evidence="1">
    <location>
        <begin position="246"/>
        <end position="247"/>
    </location>
</feature>
<feature type="modified residue" description="Pyruvic acid (Ser); by autocatalysis" evidence="1">
    <location>
        <position position="247"/>
    </location>
</feature>
<organism>
    <name type="scientific">Xylella fastidiosa (strain Temecula1 / ATCC 700964)</name>
    <dbReference type="NCBI Taxonomy" id="183190"/>
    <lineage>
        <taxon>Bacteria</taxon>
        <taxon>Pseudomonadati</taxon>
        <taxon>Pseudomonadota</taxon>
        <taxon>Gammaproteobacteria</taxon>
        <taxon>Lysobacterales</taxon>
        <taxon>Lysobacteraceae</taxon>
        <taxon>Xylella</taxon>
    </lineage>
</organism>
<accession>Q87DS7</accession>
<reference key="1">
    <citation type="journal article" date="2003" name="J. Bacteriol.">
        <title>Comparative analyses of the complete genome sequences of Pierce's disease and citrus variegated chlorosis strains of Xylella fastidiosa.</title>
        <authorList>
            <person name="Van Sluys M.A."/>
            <person name="de Oliveira M.C."/>
            <person name="Monteiro-Vitorello C.B."/>
            <person name="Miyaki C.Y."/>
            <person name="Furlan L.R."/>
            <person name="Camargo L.E.A."/>
            <person name="da Silva A.C.R."/>
            <person name="Moon D.H."/>
            <person name="Takita M.A."/>
            <person name="Lemos E.G.M."/>
            <person name="Machado M.A."/>
            <person name="Ferro M.I.T."/>
            <person name="da Silva F.R."/>
            <person name="Goldman M.H.S."/>
            <person name="Goldman G.H."/>
            <person name="Lemos M.V.F."/>
            <person name="El-Dorry H."/>
            <person name="Tsai S.M."/>
            <person name="Carrer H."/>
            <person name="Carraro D.M."/>
            <person name="de Oliveira R.C."/>
            <person name="Nunes L.R."/>
            <person name="Siqueira W.J."/>
            <person name="Coutinho L.L."/>
            <person name="Kimura E.T."/>
            <person name="Ferro E.S."/>
            <person name="Harakava R."/>
            <person name="Kuramae E.E."/>
            <person name="Marino C.L."/>
            <person name="Giglioti E."/>
            <person name="Abreu I.L."/>
            <person name="Alves L.M.C."/>
            <person name="do Amaral A.M."/>
            <person name="Baia G.S."/>
            <person name="Blanco S.R."/>
            <person name="Brito M.S."/>
            <person name="Cannavan F.S."/>
            <person name="Celestino A.V."/>
            <person name="da Cunha A.F."/>
            <person name="Fenille R.C."/>
            <person name="Ferro J.A."/>
            <person name="Formighieri E.F."/>
            <person name="Kishi L.T."/>
            <person name="Leoni S.G."/>
            <person name="Oliveira A.R."/>
            <person name="Rosa V.E. Jr."/>
            <person name="Sassaki F.T."/>
            <person name="Sena J.A.D."/>
            <person name="de Souza A.A."/>
            <person name="Truffi D."/>
            <person name="Tsukumo F."/>
            <person name="Yanai G.M."/>
            <person name="Zaros L.G."/>
            <person name="Civerolo E.L."/>
            <person name="Simpson A.J.G."/>
            <person name="Almeida N.F. Jr."/>
            <person name="Setubal J.C."/>
            <person name="Kitajima J.P."/>
        </authorList>
    </citation>
    <scope>NUCLEOTIDE SEQUENCE [LARGE SCALE GENOMIC DNA]</scope>
    <source>
        <strain>Temecula1 / ATCC 700964</strain>
    </source>
</reference>
<keyword id="KW-1003">Cell membrane</keyword>
<keyword id="KW-0210">Decarboxylase</keyword>
<keyword id="KW-0444">Lipid biosynthesis</keyword>
<keyword id="KW-0443">Lipid metabolism</keyword>
<keyword id="KW-0456">Lyase</keyword>
<keyword id="KW-0472">Membrane</keyword>
<keyword id="KW-0594">Phospholipid biosynthesis</keyword>
<keyword id="KW-1208">Phospholipid metabolism</keyword>
<keyword id="KW-0670">Pyruvate</keyword>
<keyword id="KW-1185">Reference proteome</keyword>
<keyword id="KW-0865">Zymogen</keyword>